<protein>
    <recommendedName>
        <fullName evidence="1">Probable dual-specificity RNA methyltransferase RlmN</fullName>
        <ecNumber evidence="1">2.1.1.192</ecNumber>
    </recommendedName>
    <alternativeName>
        <fullName evidence="1">23S rRNA (adenine(2503)-C(2))-methyltransferase</fullName>
    </alternativeName>
    <alternativeName>
        <fullName evidence="1">23S rRNA m2A2503 methyltransferase</fullName>
    </alternativeName>
    <alternativeName>
        <fullName evidence="1">Ribosomal RNA large subunit methyltransferase N</fullName>
    </alternativeName>
    <alternativeName>
        <fullName evidence="1">tRNA (adenine(37)-C(2))-methyltransferase</fullName>
    </alternativeName>
    <alternativeName>
        <fullName evidence="1">tRNA m2A37 methyltransferase</fullName>
    </alternativeName>
</protein>
<comment type="function">
    <text evidence="1">Specifically methylates position 2 of adenine 2503 in 23S rRNA and position 2 of adenine 37 in tRNAs.</text>
</comment>
<comment type="catalytic activity">
    <reaction evidence="1">
        <text>adenosine(2503) in 23S rRNA + 2 reduced [2Fe-2S]-[ferredoxin] + 2 S-adenosyl-L-methionine = 2-methyladenosine(2503) in 23S rRNA + 5'-deoxyadenosine + L-methionine + 2 oxidized [2Fe-2S]-[ferredoxin] + S-adenosyl-L-homocysteine</text>
        <dbReference type="Rhea" id="RHEA:42916"/>
        <dbReference type="Rhea" id="RHEA-COMP:10000"/>
        <dbReference type="Rhea" id="RHEA-COMP:10001"/>
        <dbReference type="Rhea" id="RHEA-COMP:10152"/>
        <dbReference type="Rhea" id="RHEA-COMP:10282"/>
        <dbReference type="ChEBI" id="CHEBI:17319"/>
        <dbReference type="ChEBI" id="CHEBI:33737"/>
        <dbReference type="ChEBI" id="CHEBI:33738"/>
        <dbReference type="ChEBI" id="CHEBI:57844"/>
        <dbReference type="ChEBI" id="CHEBI:57856"/>
        <dbReference type="ChEBI" id="CHEBI:59789"/>
        <dbReference type="ChEBI" id="CHEBI:74411"/>
        <dbReference type="ChEBI" id="CHEBI:74497"/>
        <dbReference type="EC" id="2.1.1.192"/>
    </reaction>
</comment>
<comment type="catalytic activity">
    <reaction evidence="1">
        <text>adenosine(37) in tRNA + 2 reduced [2Fe-2S]-[ferredoxin] + 2 S-adenosyl-L-methionine = 2-methyladenosine(37) in tRNA + 5'-deoxyadenosine + L-methionine + 2 oxidized [2Fe-2S]-[ferredoxin] + S-adenosyl-L-homocysteine</text>
        <dbReference type="Rhea" id="RHEA:43332"/>
        <dbReference type="Rhea" id="RHEA-COMP:10000"/>
        <dbReference type="Rhea" id="RHEA-COMP:10001"/>
        <dbReference type="Rhea" id="RHEA-COMP:10162"/>
        <dbReference type="Rhea" id="RHEA-COMP:10485"/>
        <dbReference type="ChEBI" id="CHEBI:17319"/>
        <dbReference type="ChEBI" id="CHEBI:33737"/>
        <dbReference type="ChEBI" id="CHEBI:33738"/>
        <dbReference type="ChEBI" id="CHEBI:57844"/>
        <dbReference type="ChEBI" id="CHEBI:57856"/>
        <dbReference type="ChEBI" id="CHEBI:59789"/>
        <dbReference type="ChEBI" id="CHEBI:74411"/>
        <dbReference type="ChEBI" id="CHEBI:74497"/>
        <dbReference type="EC" id="2.1.1.192"/>
    </reaction>
</comment>
<comment type="cofactor">
    <cofactor evidence="1">
        <name>[4Fe-4S] cluster</name>
        <dbReference type="ChEBI" id="CHEBI:49883"/>
    </cofactor>
    <text evidence="1">Binds 1 [4Fe-4S] cluster. The cluster is coordinated with 3 cysteines and an exchangeable S-adenosyl-L-methionine.</text>
</comment>
<comment type="subcellular location">
    <subcellularLocation>
        <location evidence="1">Cytoplasm</location>
    </subcellularLocation>
</comment>
<comment type="miscellaneous">
    <text evidence="1">Reaction proceeds by a ping-pong mechanism involving intermediate methylation of a conserved cysteine residue.</text>
</comment>
<comment type="similarity">
    <text evidence="1">Belongs to the radical SAM superfamily. RlmN family.</text>
</comment>
<reference key="1">
    <citation type="submission" date="2007-10" db="EMBL/GenBank/DDBJ databases">
        <title>Complete genome of Alkaliphilus oremlandii OhILAs.</title>
        <authorList>
            <person name="Copeland A."/>
            <person name="Lucas S."/>
            <person name="Lapidus A."/>
            <person name="Barry K."/>
            <person name="Detter J.C."/>
            <person name="Glavina del Rio T."/>
            <person name="Hammon N."/>
            <person name="Israni S."/>
            <person name="Dalin E."/>
            <person name="Tice H."/>
            <person name="Pitluck S."/>
            <person name="Chain P."/>
            <person name="Malfatti S."/>
            <person name="Shin M."/>
            <person name="Vergez L."/>
            <person name="Schmutz J."/>
            <person name="Larimer F."/>
            <person name="Land M."/>
            <person name="Hauser L."/>
            <person name="Kyrpides N."/>
            <person name="Mikhailova N."/>
            <person name="Stolz J.F."/>
            <person name="Dawson A."/>
            <person name="Fisher E."/>
            <person name="Crable B."/>
            <person name="Perera E."/>
            <person name="Lisak J."/>
            <person name="Ranganathan M."/>
            <person name="Basu P."/>
            <person name="Richardson P."/>
        </authorList>
    </citation>
    <scope>NUCLEOTIDE SEQUENCE [LARGE SCALE GENOMIC DNA]</scope>
    <source>
        <strain>OhILAs</strain>
    </source>
</reference>
<accession>A8MH89</accession>
<keyword id="KW-0004">4Fe-4S</keyword>
<keyword id="KW-0963">Cytoplasm</keyword>
<keyword id="KW-1015">Disulfide bond</keyword>
<keyword id="KW-0408">Iron</keyword>
<keyword id="KW-0411">Iron-sulfur</keyword>
<keyword id="KW-0479">Metal-binding</keyword>
<keyword id="KW-0489">Methyltransferase</keyword>
<keyword id="KW-1185">Reference proteome</keyword>
<keyword id="KW-0698">rRNA processing</keyword>
<keyword id="KW-0949">S-adenosyl-L-methionine</keyword>
<keyword id="KW-0808">Transferase</keyword>
<keyword id="KW-0819">tRNA processing</keyword>
<sequence>MEKIDLLSLTLKEIEEILTNMGEKKFRGKQIFQWVNKGVKTFDEMTNLSKNLRDQLAERTYITNIKIEKKLISSIDGTIKYLFLLEDCNIIEGVVMKYHHGLTACISTQVGCAMGCTFCASTLDGLVRNLRAGEMIDQILTMQEDTGERISNIVLMGSGEPLHNYDETINFLKIINDENGLNIGNRHITLSTSGLVPQIKTLADLKIPINLAISLHAPNDELRQQTMPVAKKYAIDELIDSCRYYIEKTGRRITFEYALIKGVNDRDKDARELGDLLKGMLCHVNLIPVNNVDERGYKKPSIESIHQFQNTLKKAGIETTVRREMGADINAACGQLRRKHLQN</sequence>
<name>RLMN_ALKOO</name>
<gene>
    <name evidence="1" type="primary">rlmN</name>
    <name type="ordered locus">Clos_1432</name>
</gene>
<proteinExistence type="inferred from homology"/>
<evidence type="ECO:0000255" key="1">
    <source>
        <dbReference type="HAMAP-Rule" id="MF_01849"/>
    </source>
</evidence>
<evidence type="ECO:0000255" key="2">
    <source>
        <dbReference type="PROSITE-ProRule" id="PRU01266"/>
    </source>
</evidence>
<dbReference type="EC" id="2.1.1.192" evidence="1"/>
<dbReference type="EMBL" id="CP000853">
    <property type="protein sequence ID" value="ABW18976.1"/>
    <property type="molecule type" value="Genomic_DNA"/>
</dbReference>
<dbReference type="RefSeq" id="WP_012159288.1">
    <property type="nucleotide sequence ID" value="NC_009922.1"/>
</dbReference>
<dbReference type="SMR" id="A8MH89"/>
<dbReference type="STRING" id="350688.Clos_1432"/>
<dbReference type="KEGG" id="aoe:Clos_1432"/>
<dbReference type="eggNOG" id="COG0820">
    <property type="taxonomic scope" value="Bacteria"/>
</dbReference>
<dbReference type="HOGENOM" id="CLU_029101_0_1_9"/>
<dbReference type="OrthoDB" id="9793973at2"/>
<dbReference type="Proteomes" id="UP000000269">
    <property type="component" value="Chromosome"/>
</dbReference>
<dbReference type="GO" id="GO:0005737">
    <property type="term" value="C:cytoplasm"/>
    <property type="evidence" value="ECO:0007669"/>
    <property type="project" value="UniProtKB-SubCell"/>
</dbReference>
<dbReference type="GO" id="GO:0051539">
    <property type="term" value="F:4 iron, 4 sulfur cluster binding"/>
    <property type="evidence" value="ECO:0007669"/>
    <property type="project" value="UniProtKB-UniRule"/>
</dbReference>
<dbReference type="GO" id="GO:0046872">
    <property type="term" value="F:metal ion binding"/>
    <property type="evidence" value="ECO:0007669"/>
    <property type="project" value="UniProtKB-KW"/>
</dbReference>
<dbReference type="GO" id="GO:0070040">
    <property type="term" value="F:rRNA (adenine(2503)-C2-)-methyltransferase activity"/>
    <property type="evidence" value="ECO:0007669"/>
    <property type="project" value="UniProtKB-UniRule"/>
</dbReference>
<dbReference type="GO" id="GO:0019843">
    <property type="term" value="F:rRNA binding"/>
    <property type="evidence" value="ECO:0007669"/>
    <property type="project" value="UniProtKB-UniRule"/>
</dbReference>
<dbReference type="GO" id="GO:0002935">
    <property type="term" value="F:tRNA (adenine(37)-C2)-methyltransferase activity"/>
    <property type="evidence" value="ECO:0007669"/>
    <property type="project" value="UniProtKB-UniRule"/>
</dbReference>
<dbReference type="GO" id="GO:0000049">
    <property type="term" value="F:tRNA binding"/>
    <property type="evidence" value="ECO:0007669"/>
    <property type="project" value="UniProtKB-UniRule"/>
</dbReference>
<dbReference type="GO" id="GO:0070475">
    <property type="term" value="P:rRNA base methylation"/>
    <property type="evidence" value="ECO:0007669"/>
    <property type="project" value="UniProtKB-UniRule"/>
</dbReference>
<dbReference type="GO" id="GO:0030488">
    <property type="term" value="P:tRNA methylation"/>
    <property type="evidence" value="ECO:0007669"/>
    <property type="project" value="UniProtKB-UniRule"/>
</dbReference>
<dbReference type="CDD" id="cd01335">
    <property type="entry name" value="Radical_SAM"/>
    <property type="match status" value="1"/>
</dbReference>
<dbReference type="FunFam" id="3.20.20.70:FF:000014">
    <property type="entry name" value="Probable dual-specificity RNA methyltransferase RlmN"/>
    <property type="match status" value="1"/>
</dbReference>
<dbReference type="Gene3D" id="1.10.150.530">
    <property type="match status" value="1"/>
</dbReference>
<dbReference type="Gene3D" id="3.20.20.70">
    <property type="entry name" value="Aldolase class I"/>
    <property type="match status" value="1"/>
</dbReference>
<dbReference type="HAMAP" id="MF_01849">
    <property type="entry name" value="RNA_methyltr_RlmN"/>
    <property type="match status" value="1"/>
</dbReference>
<dbReference type="InterPro" id="IPR013785">
    <property type="entry name" value="Aldolase_TIM"/>
</dbReference>
<dbReference type="InterPro" id="IPR040072">
    <property type="entry name" value="Methyltransferase_A"/>
</dbReference>
<dbReference type="InterPro" id="IPR048641">
    <property type="entry name" value="RlmN_N"/>
</dbReference>
<dbReference type="InterPro" id="IPR027492">
    <property type="entry name" value="RNA_MTrfase_RlmN"/>
</dbReference>
<dbReference type="InterPro" id="IPR004383">
    <property type="entry name" value="rRNA_lsu_MTrfase_RlmN/Cfr"/>
</dbReference>
<dbReference type="InterPro" id="IPR007197">
    <property type="entry name" value="rSAM"/>
</dbReference>
<dbReference type="NCBIfam" id="TIGR00048">
    <property type="entry name" value="rRNA_mod_RlmN"/>
    <property type="match status" value="1"/>
</dbReference>
<dbReference type="PANTHER" id="PTHR30544">
    <property type="entry name" value="23S RRNA METHYLTRANSFERASE"/>
    <property type="match status" value="1"/>
</dbReference>
<dbReference type="PANTHER" id="PTHR30544:SF5">
    <property type="entry name" value="RADICAL SAM CORE DOMAIN-CONTAINING PROTEIN"/>
    <property type="match status" value="1"/>
</dbReference>
<dbReference type="Pfam" id="PF04055">
    <property type="entry name" value="Radical_SAM"/>
    <property type="match status" value="1"/>
</dbReference>
<dbReference type="Pfam" id="PF21016">
    <property type="entry name" value="RlmN_N"/>
    <property type="match status" value="1"/>
</dbReference>
<dbReference type="PIRSF" id="PIRSF006004">
    <property type="entry name" value="CHP00048"/>
    <property type="match status" value="1"/>
</dbReference>
<dbReference type="SFLD" id="SFLDF00275">
    <property type="entry name" value="adenosine_C2_methyltransferase"/>
    <property type="match status" value="1"/>
</dbReference>
<dbReference type="SFLD" id="SFLDS00029">
    <property type="entry name" value="Radical_SAM"/>
    <property type="match status" value="1"/>
</dbReference>
<dbReference type="SUPFAM" id="SSF102114">
    <property type="entry name" value="Radical SAM enzymes"/>
    <property type="match status" value="1"/>
</dbReference>
<dbReference type="PROSITE" id="PS51918">
    <property type="entry name" value="RADICAL_SAM"/>
    <property type="match status" value="1"/>
</dbReference>
<feature type="chain" id="PRO_0000350011" description="Probable dual-specificity RNA methyltransferase RlmN">
    <location>
        <begin position="1"/>
        <end position="343"/>
    </location>
</feature>
<feature type="domain" description="Radical SAM core" evidence="2">
    <location>
        <begin position="98"/>
        <end position="328"/>
    </location>
</feature>
<feature type="active site" description="Proton acceptor" evidence="1">
    <location>
        <position position="92"/>
    </location>
</feature>
<feature type="active site" description="S-methylcysteine intermediate" evidence="1">
    <location>
        <position position="333"/>
    </location>
</feature>
<feature type="binding site" evidence="1">
    <location>
        <position position="112"/>
    </location>
    <ligand>
        <name>[4Fe-4S] cluster</name>
        <dbReference type="ChEBI" id="CHEBI:49883"/>
        <note>4Fe-4S-S-AdoMet</note>
    </ligand>
</feature>
<feature type="binding site" evidence="1">
    <location>
        <position position="116"/>
    </location>
    <ligand>
        <name>[4Fe-4S] cluster</name>
        <dbReference type="ChEBI" id="CHEBI:49883"/>
        <note>4Fe-4S-S-AdoMet</note>
    </ligand>
</feature>
<feature type="binding site" evidence="1">
    <location>
        <position position="119"/>
    </location>
    <ligand>
        <name>[4Fe-4S] cluster</name>
        <dbReference type="ChEBI" id="CHEBI:49883"/>
        <note>4Fe-4S-S-AdoMet</note>
    </ligand>
</feature>
<feature type="binding site" evidence="1">
    <location>
        <begin position="159"/>
        <end position="160"/>
    </location>
    <ligand>
        <name>S-adenosyl-L-methionine</name>
        <dbReference type="ChEBI" id="CHEBI:59789"/>
    </ligand>
</feature>
<feature type="binding site" evidence="1">
    <location>
        <position position="191"/>
    </location>
    <ligand>
        <name>S-adenosyl-L-methionine</name>
        <dbReference type="ChEBI" id="CHEBI:59789"/>
    </ligand>
</feature>
<feature type="binding site" evidence="1">
    <location>
        <begin position="214"/>
        <end position="216"/>
    </location>
    <ligand>
        <name>S-adenosyl-L-methionine</name>
        <dbReference type="ChEBI" id="CHEBI:59789"/>
    </ligand>
</feature>
<feature type="binding site" evidence="1">
    <location>
        <position position="290"/>
    </location>
    <ligand>
        <name>S-adenosyl-L-methionine</name>
        <dbReference type="ChEBI" id="CHEBI:59789"/>
    </ligand>
</feature>
<feature type="disulfide bond" description="(transient)" evidence="1">
    <location>
        <begin position="105"/>
        <end position="333"/>
    </location>
</feature>
<organism>
    <name type="scientific">Alkaliphilus oremlandii (strain OhILAs)</name>
    <name type="common">Clostridium oremlandii (strain OhILAs)</name>
    <dbReference type="NCBI Taxonomy" id="350688"/>
    <lineage>
        <taxon>Bacteria</taxon>
        <taxon>Bacillati</taxon>
        <taxon>Bacillota</taxon>
        <taxon>Clostridia</taxon>
        <taxon>Peptostreptococcales</taxon>
        <taxon>Natronincolaceae</taxon>
        <taxon>Alkaliphilus</taxon>
    </lineage>
</organism>